<sequence>MWAGILEILSAFIRILFKLLYCWALFFTVLKGFSRGPLLPLIYLINKSL</sequence>
<reference key="1">
    <citation type="journal article" date="1997" name="Nature">
        <title>The nucleotide sequence of Saccharomyces cerevisiae chromosome XIII.</title>
        <authorList>
            <person name="Bowman S."/>
            <person name="Churcher C.M."/>
            <person name="Badcock K."/>
            <person name="Brown D."/>
            <person name="Chillingworth T."/>
            <person name="Connor R."/>
            <person name="Dedman K."/>
            <person name="Devlin K."/>
            <person name="Gentles S."/>
            <person name="Hamlin N."/>
            <person name="Hunt S."/>
            <person name="Jagels K."/>
            <person name="Lye G."/>
            <person name="Moule S."/>
            <person name="Odell C."/>
            <person name="Pearson D."/>
            <person name="Rajandream M.A."/>
            <person name="Rice P."/>
            <person name="Skelton J."/>
            <person name="Walsh S.V."/>
            <person name="Whitehead S."/>
            <person name="Barrell B.G."/>
        </authorList>
    </citation>
    <scope>NUCLEOTIDE SEQUENCE [LARGE SCALE GENOMIC DNA]</scope>
    <source>
        <strain>ATCC 204508 / S288c</strain>
    </source>
</reference>
<reference key="2">
    <citation type="journal article" date="2014" name="G3 (Bethesda)">
        <title>The reference genome sequence of Saccharomyces cerevisiae: Then and now.</title>
        <authorList>
            <person name="Engel S.R."/>
            <person name="Dietrich F.S."/>
            <person name="Fisk D.G."/>
            <person name="Binkley G."/>
            <person name="Balakrishnan R."/>
            <person name="Costanzo M.C."/>
            <person name="Dwight S.S."/>
            <person name="Hitz B.C."/>
            <person name="Karra K."/>
            <person name="Nash R.S."/>
            <person name="Weng S."/>
            <person name="Wong E.D."/>
            <person name="Lloyd P."/>
            <person name="Skrzypek M.S."/>
            <person name="Miyasato S.R."/>
            <person name="Simison M."/>
            <person name="Cherry J.M."/>
        </authorList>
    </citation>
    <scope>GENOME REANNOTATION</scope>
    <source>
        <strain>ATCC 204508 / S288c</strain>
    </source>
</reference>
<reference key="3">
    <citation type="journal article" date="2002" name="Genome Res.">
        <title>Parallel identification of new genes in Saccharomyces cerevisiae.</title>
        <authorList>
            <person name="Oshiro G."/>
            <person name="Wodicka L.M."/>
            <person name="Washburn M.P."/>
            <person name="Yates J.R. III"/>
            <person name="Lockhart D.J."/>
            <person name="Winzeler E.A."/>
        </authorList>
    </citation>
    <scope>IDENTIFICATION BY MASS SPECTROMETRY</scope>
</reference>
<dbReference type="EMBL" id="Z48613">
    <property type="status" value="NOT_ANNOTATED_CDS"/>
    <property type="molecule type" value="Genomic_DNA"/>
</dbReference>
<dbReference type="EMBL" id="BK006946">
    <property type="status" value="NOT_ANNOTATED_CDS"/>
    <property type="molecule type" value="Genomic_DNA"/>
</dbReference>
<dbReference type="SMR" id="P0C5Q3"/>
<dbReference type="STRING" id="4932.YMR013C-A"/>
<dbReference type="PaxDb" id="4932-YMR013C-A"/>
<dbReference type="EnsemblFungi" id="YMR013C-A_mRNA">
    <property type="protein sequence ID" value="YMR013C-A"/>
    <property type="gene ID" value="YMR013C-A"/>
</dbReference>
<dbReference type="AGR" id="SGD:S000028847"/>
<dbReference type="SGD" id="S000028847">
    <property type="gene designation" value="YMR013C-A"/>
</dbReference>
<dbReference type="HOGENOM" id="CLU_3144072_0_0_1"/>
<dbReference type="InParanoid" id="P0C5Q3"/>
<dbReference type="PRO" id="PR:P0C5Q3"/>
<dbReference type="Proteomes" id="UP000002311">
    <property type="component" value="Chromosome XIII"/>
</dbReference>
<dbReference type="GO" id="GO:0016020">
    <property type="term" value="C:membrane"/>
    <property type="evidence" value="ECO:0007669"/>
    <property type="project" value="UniProtKB-SubCell"/>
</dbReference>
<comment type="subcellular location">
    <subcellularLocation>
        <location evidence="2">Membrane</location>
        <topology evidence="2">Single-pass membrane protein</topology>
    </subcellularLocation>
</comment>
<keyword id="KW-0472">Membrane</keyword>
<keyword id="KW-1185">Reference proteome</keyword>
<keyword id="KW-0812">Transmembrane</keyword>
<keyword id="KW-1133">Transmembrane helix</keyword>
<name>YM13C_YEAST</name>
<gene>
    <name type="ordered locus">YMR013C-A</name>
</gene>
<protein>
    <recommendedName>
        <fullName>Uncharacterized protein YMR013C-A</fullName>
    </recommendedName>
</protein>
<organism>
    <name type="scientific">Saccharomyces cerevisiae (strain ATCC 204508 / S288c)</name>
    <name type="common">Baker's yeast</name>
    <dbReference type="NCBI Taxonomy" id="559292"/>
    <lineage>
        <taxon>Eukaryota</taxon>
        <taxon>Fungi</taxon>
        <taxon>Dikarya</taxon>
        <taxon>Ascomycota</taxon>
        <taxon>Saccharomycotina</taxon>
        <taxon>Saccharomycetes</taxon>
        <taxon>Saccharomycetales</taxon>
        <taxon>Saccharomycetaceae</taxon>
        <taxon>Saccharomyces</taxon>
    </lineage>
</organism>
<proteinExistence type="evidence at protein level"/>
<accession>P0C5Q3</accession>
<feature type="chain" id="PRO_0000309051" description="Uncharacterized protein YMR013C-A">
    <location>
        <begin position="1"/>
        <end position="49"/>
    </location>
</feature>
<feature type="transmembrane region" description="Helical" evidence="1">
    <location>
        <begin position="5"/>
        <end position="27"/>
    </location>
</feature>
<evidence type="ECO:0000255" key="1"/>
<evidence type="ECO:0000305" key="2"/>